<keyword id="KW-0687">Ribonucleoprotein</keyword>
<keyword id="KW-0689">Ribosomal protein</keyword>
<sequence length="91" mass="10235">MAVKIRLTRLGSKRNPFYRIVVADARSPRDGRIIEQIGTYNPTSANAPEIKVDEALALKWLNDGAKPTDTVHNILSKEGIMKKFDEQKKAK</sequence>
<proteinExistence type="inferred from homology"/>
<comment type="similarity">
    <text evidence="1">Belongs to the bacterial ribosomal protein bS16 family.</text>
</comment>
<protein>
    <recommendedName>
        <fullName evidence="1">Small ribosomal subunit protein bS16</fullName>
    </recommendedName>
    <alternativeName>
        <fullName evidence="2">30S ribosomal protein S16</fullName>
    </alternativeName>
</protein>
<feature type="chain" id="PRO_0000243875" description="Small ribosomal subunit protein bS16">
    <location>
        <begin position="1"/>
        <end position="91"/>
    </location>
</feature>
<reference key="1">
    <citation type="journal article" date="2006" name="Lancet">
        <title>Complete genome sequence of USA300, an epidemic clone of community-acquired meticillin-resistant Staphylococcus aureus.</title>
        <authorList>
            <person name="Diep B.A."/>
            <person name="Gill S.R."/>
            <person name="Chang R.F."/>
            <person name="Phan T.H."/>
            <person name="Chen J.H."/>
            <person name="Davidson M.G."/>
            <person name="Lin F."/>
            <person name="Lin J."/>
            <person name="Carleton H.A."/>
            <person name="Mongodin E.F."/>
            <person name="Sensabaugh G.F."/>
            <person name="Perdreau-Remington F."/>
        </authorList>
    </citation>
    <scope>NUCLEOTIDE SEQUENCE [LARGE SCALE GENOMIC DNA]</scope>
    <source>
        <strain>USA300</strain>
    </source>
</reference>
<name>RS16_STAA3</name>
<dbReference type="EMBL" id="CP000255">
    <property type="protein sequence ID" value="ABD22084.1"/>
    <property type="molecule type" value="Genomic_DNA"/>
</dbReference>
<dbReference type="RefSeq" id="WP_000268754.1">
    <property type="nucleotide sequence ID" value="NZ_CP027476.1"/>
</dbReference>
<dbReference type="SMR" id="Q2FHK0"/>
<dbReference type="GeneID" id="66839430"/>
<dbReference type="KEGG" id="saa:SAUSA300_1131"/>
<dbReference type="HOGENOM" id="CLU_100590_5_0_9"/>
<dbReference type="Proteomes" id="UP000001939">
    <property type="component" value="Chromosome"/>
</dbReference>
<dbReference type="GO" id="GO:0005737">
    <property type="term" value="C:cytoplasm"/>
    <property type="evidence" value="ECO:0007669"/>
    <property type="project" value="UniProtKB-ARBA"/>
</dbReference>
<dbReference type="GO" id="GO:0015935">
    <property type="term" value="C:small ribosomal subunit"/>
    <property type="evidence" value="ECO:0007669"/>
    <property type="project" value="TreeGrafter"/>
</dbReference>
<dbReference type="GO" id="GO:0003735">
    <property type="term" value="F:structural constituent of ribosome"/>
    <property type="evidence" value="ECO:0007669"/>
    <property type="project" value="InterPro"/>
</dbReference>
<dbReference type="GO" id="GO:0006412">
    <property type="term" value="P:translation"/>
    <property type="evidence" value="ECO:0007669"/>
    <property type="project" value="UniProtKB-UniRule"/>
</dbReference>
<dbReference type="FunFam" id="3.30.1320.10:FF:000002">
    <property type="entry name" value="30S ribosomal protein S16"/>
    <property type="match status" value="1"/>
</dbReference>
<dbReference type="Gene3D" id="3.30.1320.10">
    <property type="match status" value="1"/>
</dbReference>
<dbReference type="HAMAP" id="MF_00385">
    <property type="entry name" value="Ribosomal_bS16"/>
    <property type="match status" value="1"/>
</dbReference>
<dbReference type="InterPro" id="IPR000307">
    <property type="entry name" value="Ribosomal_bS16"/>
</dbReference>
<dbReference type="InterPro" id="IPR023803">
    <property type="entry name" value="Ribosomal_bS16_dom_sf"/>
</dbReference>
<dbReference type="NCBIfam" id="TIGR00002">
    <property type="entry name" value="S16"/>
    <property type="match status" value="1"/>
</dbReference>
<dbReference type="PANTHER" id="PTHR12919">
    <property type="entry name" value="30S RIBOSOMAL PROTEIN S16"/>
    <property type="match status" value="1"/>
</dbReference>
<dbReference type="PANTHER" id="PTHR12919:SF20">
    <property type="entry name" value="SMALL RIBOSOMAL SUBUNIT PROTEIN BS16M"/>
    <property type="match status" value="1"/>
</dbReference>
<dbReference type="Pfam" id="PF00886">
    <property type="entry name" value="Ribosomal_S16"/>
    <property type="match status" value="1"/>
</dbReference>
<dbReference type="SUPFAM" id="SSF54565">
    <property type="entry name" value="Ribosomal protein S16"/>
    <property type="match status" value="1"/>
</dbReference>
<gene>
    <name evidence="1" type="primary">rpsP</name>
    <name type="ordered locus">SAUSA300_1131</name>
</gene>
<evidence type="ECO:0000255" key="1">
    <source>
        <dbReference type="HAMAP-Rule" id="MF_00385"/>
    </source>
</evidence>
<evidence type="ECO:0000305" key="2"/>
<organism>
    <name type="scientific">Staphylococcus aureus (strain USA300)</name>
    <dbReference type="NCBI Taxonomy" id="367830"/>
    <lineage>
        <taxon>Bacteria</taxon>
        <taxon>Bacillati</taxon>
        <taxon>Bacillota</taxon>
        <taxon>Bacilli</taxon>
        <taxon>Bacillales</taxon>
        <taxon>Staphylococcaceae</taxon>
        <taxon>Staphylococcus</taxon>
    </lineage>
</organism>
<accession>Q2FHK0</accession>